<evidence type="ECO:0000250" key="1"/>
<evidence type="ECO:0000250" key="2">
    <source>
        <dbReference type="UniProtKB" id="Q9QXA7"/>
    </source>
</evidence>
<evidence type="ECO:0000255" key="3"/>
<evidence type="ECO:0000255" key="4">
    <source>
        <dbReference type="PROSITE-ProRule" id="PRU00024"/>
    </source>
</evidence>
<evidence type="ECO:0000256" key="5">
    <source>
        <dbReference type="SAM" id="MobiDB-lite"/>
    </source>
</evidence>
<evidence type="ECO:0000269" key="6">
    <source>
    </source>
</evidence>
<evidence type="ECO:0000269" key="7">
    <source>
    </source>
</evidence>
<evidence type="ECO:0000305" key="8"/>
<feature type="chain" id="PRO_0000220372" description="Tripartite motif-containing protein 44">
    <location>
        <begin position="1"/>
        <end position="344"/>
    </location>
</feature>
<feature type="zinc finger region" description="B box-type" evidence="4">
    <location>
        <begin position="174"/>
        <end position="215"/>
    </location>
</feature>
<feature type="region of interest" description="Disordered" evidence="5">
    <location>
        <begin position="1"/>
        <end position="25"/>
    </location>
</feature>
<feature type="region of interest" description="Disordered" evidence="5">
    <location>
        <begin position="66"/>
        <end position="165"/>
    </location>
</feature>
<feature type="region of interest" description="Disordered" evidence="5">
    <location>
        <begin position="309"/>
        <end position="344"/>
    </location>
</feature>
<feature type="coiled-coil region" evidence="3">
    <location>
        <begin position="290"/>
        <end position="325"/>
    </location>
</feature>
<feature type="compositionally biased region" description="Basic and acidic residues" evidence="5">
    <location>
        <begin position="75"/>
        <end position="92"/>
    </location>
</feature>
<feature type="compositionally biased region" description="Acidic residues" evidence="5">
    <location>
        <begin position="93"/>
        <end position="165"/>
    </location>
</feature>
<feature type="compositionally biased region" description="Acidic residues" evidence="5">
    <location>
        <begin position="330"/>
        <end position="344"/>
    </location>
</feature>
<feature type="binding site" evidence="4">
    <location>
        <position position="179"/>
    </location>
    <ligand>
        <name>Zn(2+)</name>
        <dbReference type="ChEBI" id="CHEBI:29105"/>
    </ligand>
</feature>
<feature type="binding site" evidence="4">
    <location>
        <position position="182"/>
    </location>
    <ligand>
        <name>Zn(2+)</name>
        <dbReference type="ChEBI" id="CHEBI:29105"/>
    </ligand>
</feature>
<feature type="binding site" evidence="4">
    <location>
        <position position="201"/>
    </location>
    <ligand>
        <name>Zn(2+)</name>
        <dbReference type="ChEBI" id="CHEBI:29105"/>
    </ligand>
</feature>
<feature type="binding site" evidence="4">
    <location>
        <position position="207"/>
    </location>
    <ligand>
        <name>Zn(2+)</name>
        <dbReference type="ChEBI" id="CHEBI:29105"/>
    </ligand>
</feature>
<feature type="modified residue" description="Phosphoserine" evidence="2">
    <location>
        <position position="336"/>
    </location>
</feature>
<feature type="modified residue" description="Phosphoserine" evidence="2">
    <location>
        <position position="339"/>
    </location>
</feature>
<feature type="sequence variant" id="VAR_077852" description="Does not affect function in negative regulation of PAX6 expression; dbSNP:rs377117775." evidence="7">
    <original>S</original>
    <variation>Y</variation>
    <location>
        <position position="64"/>
    </location>
</feature>
<feature type="sequence variant" id="VAR_077853" description="In AN3; affects function and results in increased negative regulation of PAX6 expression compared to wild-type; dbSNP:rs886039241." evidence="7">
    <original>G</original>
    <variation>R</variation>
    <location>
        <position position="155"/>
    </location>
</feature>
<feature type="sequence conflict" description="In Ref. 1; CAB65108." evidence="8" ref="1">
    <original>C</original>
    <variation>S</variation>
    <location>
        <position position="41"/>
    </location>
</feature>
<feature type="sequence conflict" description="In Ref. 1; CAB65108." evidence="8" ref="1">
    <original>A</original>
    <variation>G</variation>
    <location>
        <position position="232"/>
    </location>
</feature>
<dbReference type="EMBL" id="AJ249128">
    <property type="protein sequence ID" value="CAB65108.1"/>
    <property type="molecule type" value="mRNA"/>
</dbReference>
<dbReference type="EMBL" id="AL138812">
    <property type="status" value="NOT_ANNOTATED_CDS"/>
    <property type="molecule type" value="Genomic_DNA"/>
</dbReference>
<dbReference type="EMBL" id="CH471064">
    <property type="protein sequence ID" value="EAW68133.1"/>
    <property type="molecule type" value="Genomic_DNA"/>
</dbReference>
<dbReference type="EMBL" id="CH471064">
    <property type="protein sequence ID" value="EAW68134.1"/>
    <property type="molecule type" value="Genomic_DNA"/>
</dbReference>
<dbReference type="EMBL" id="BC013166">
    <property type="protein sequence ID" value="AAH13166.1"/>
    <property type="molecule type" value="mRNA"/>
</dbReference>
<dbReference type="EMBL" id="BC024031">
    <property type="protein sequence ID" value="AAH24031.1"/>
    <property type="molecule type" value="mRNA"/>
</dbReference>
<dbReference type="CCDS" id="CCDS31461.1"/>
<dbReference type="RefSeq" id="NP_060053.2">
    <property type="nucleotide sequence ID" value="NM_017583.5"/>
</dbReference>
<dbReference type="SMR" id="Q96DX7"/>
<dbReference type="BioGRID" id="120140">
    <property type="interactions" value="71"/>
</dbReference>
<dbReference type="FunCoup" id="Q96DX7">
    <property type="interactions" value="1203"/>
</dbReference>
<dbReference type="IntAct" id="Q96DX7">
    <property type="interactions" value="53"/>
</dbReference>
<dbReference type="STRING" id="9606.ENSP00000299413"/>
<dbReference type="iPTMnet" id="Q96DX7"/>
<dbReference type="PhosphoSitePlus" id="Q96DX7"/>
<dbReference type="BioMuta" id="TRIM44"/>
<dbReference type="DMDM" id="56404940"/>
<dbReference type="jPOST" id="Q96DX7"/>
<dbReference type="MassIVE" id="Q96DX7"/>
<dbReference type="PaxDb" id="9606-ENSP00000299413"/>
<dbReference type="PeptideAtlas" id="Q96DX7"/>
<dbReference type="ProteomicsDB" id="76337"/>
<dbReference type="Pumba" id="Q96DX7"/>
<dbReference type="Antibodypedia" id="25982">
    <property type="antibodies" value="292 antibodies from 24 providers"/>
</dbReference>
<dbReference type="DNASU" id="54765"/>
<dbReference type="Ensembl" id="ENST00000299413.7">
    <property type="protein sequence ID" value="ENSP00000299413.5"/>
    <property type="gene ID" value="ENSG00000166326.7"/>
</dbReference>
<dbReference type="GeneID" id="54765"/>
<dbReference type="KEGG" id="hsa:54765"/>
<dbReference type="MANE-Select" id="ENST00000299413.7">
    <property type="protein sequence ID" value="ENSP00000299413.5"/>
    <property type="RefSeq nucleotide sequence ID" value="NM_017583.6"/>
    <property type="RefSeq protein sequence ID" value="NP_060053.2"/>
</dbReference>
<dbReference type="UCSC" id="uc001mwi.3">
    <property type="organism name" value="human"/>
</dbReference>
<dbReference type="AGR" id="HGNC:19016"/>
<dbReference type="CTD" id="54765"/>
<dbReference type="DisGeNET" id="54765"/>
<dbReference type="GeneCards" id="TRIM44"/>
<dbReference type="HGNC" id="HGNC:19016">
    <property type="gene designation" value="TRIM44"/>
</dbReference>
<dbReference type="HPA" id="ENSG00000166326">
    <property type="expression patterns" value="Low tissue specificity"/>
</dbReference>
<dbReference type="MalaCards" id="TRIM44"/>
<dbReference type="MIM" id="612298">
    <property type="type" value="gene"/>
</dbReference>
<dbReference type="MIM" id="617142">
    <property type="type" value="phenotype"/>
</dbReference>
<dbReference type="neXtProt" id="NX_Q96DX7"/>
<dbReference type="OpenTargets" id="ENSG00000166326"/>
<dbReference type="Orphanet" id="250923">
    <property type="disease" value="Isolated aniridia"/>
</dbReference>
<dbReference type="PharmGKB" id="PA134906584"/>
<dbReference type="VEuPathDB" id="HostDB:ENSG00000166326"/>
<dbReference type="eggNOG" id="ENOG502RHR7">
    <property type="taxonomic scope" value="Eukaryota"/>
</dbReference>
<dbReference type="GeneTree" id="ENSGT00440000034605"/>
<dbReference type="HOGENOM" id="CLU_070347_0_0_1"/>
<dbReference type="InParanoid" id="Q96DX7"/>
<dbReference type="OMA" id="LREAYMW"/>
<dbReference type="OrthoDB" id="9049620at2759"/>
<dbReference type="PAN-GO" id="Q96DX7">
    <property type="GO annotations" value="3 GO annotations based on evolutionary models"/>
</dbReference>
<dbReference type="PhylomeDB" id="Q96DX7"/>
<dbReference type="TreeFam" id="TF333911"/>
<dbReference type="PathwayCommons" id="Q96DX7"/>
<dbReference type="SignaLink" id="Q96DX7"/>
<dbReference type="BioGRID-ORCS" id="54765">
    <property type="hits" value="13 hits in 1189 CRISPR screens"/>
</dbReference>
<dbReference type="ChiTaRS" id="TRIM44">
    <property type="organism name" value="human"/>
</dbReference>
<dbReference type="GenomeRNAi" id="54765"/>
<dbReference type="Pharos" id="Q96DX7">
    <property type="development level" value="Tbio"/>
</dbReference>
<dbReference type="PRO" id="PR:Q96DX7"/>
<dbReference type="Proteomes" id="UP000005640">
    <property type="component" value="Chromosome 11"/>
</dbReference>
<dbReference type="RNAct" id="Q96DX7">
    <property type="molecule type" value="protein"/>
</dbReference>
<dbReference type="Bgee" id="ENSG00000166326">
    <property type="expression patterns" value="Expressed in pons and 213 other cell types or tissues"/>
</dbReference>
<dbReference type="GO" id="GO:0005737">
    <property type="term" value="C:cytoplasm"/>
    <property type="evidence" value="ECO:0000318"/>
    <property type="project" value="GO_Central"/>
</dbReference>
<dbReference type="GO" id="GO:0061630">
    <property type="term" value="F:ubiquitin protein ligase activity"/>
    <property type="evidence" value="ECO:0000318"/>
    <property type="project" value="GO_Central"/>
</dbReference>
<dbReference type="GO" id="GO:0008270">
    <property type="term" value="F:zinc ion binding"/>
    <property type="evidence" value="ECO:0007669"/>
    <property type="project" value="UniProtKB-KW"/>
</dbReference>
<dbReference type="GO" id="GO:0045087">
    <property type="term" value="P:innate immune response"/>
    <property type="evidence" value="ECO:0000318"/>
    <property type="project" value="GO_Central"/>
</dbReference>
<dbReference type="GO" id="GO:0061944">
    <property type="term" value="P:negative regulation of protein K48-linked ubiquitination"/>
    <property type="evidence" value="ECO:0000314"/>
    <property type="project" value="BHF-UCL"/>
</dbReference>
<dbReference type="GO" id="GO:0001961">
    <property type="term" value="P:positive regulation of cytokine-mediated signaling pathway"/>
    <property type="evidence" value="ECO:0000314"/>
    <property type="project" value="BHF-UCL"/>
</dbReference>
<dbReference type="GO" id="GO:0002230">
    <property type="term" value="P:positive regulation of defense response to virus by host"/>
    <property type="evidence" value="ECO:0000314"/>
    <property type="project" value="BHF-UCL"/>
</dbReference>
<dbReference type="GO" id="GO:0045893">
    <property type="term" value="P:positive regulation of DNA-templated transcription"/>
    <property type="evidence" value="ECO:0000314"/>
    <property type="project" value="BHF-UCL"/>
</dbReference>
<dbReference type="GO" id="GO:1901224">
    <property type="term" value="P:positive regulation of non-canonical NF-kappaB signal transduction"/>
    <property type="evidence" value="ECO:0000314"/>
    <property type="project" value="BHF-UCL"/>
</dbReference>
<dbReference type="GO" id="GO:0050821">
    <property type="term" value="P:protein stabilization"/>
    <property type="evidence" value="ECO:0000314"/>
    <property type="project" value="BHF-UCL"/>
</dbReference>
<dbReference type="GO" id="GO:0010468">
    <property type="term" value="P:regulation of gene expression"/>
    <property type="evidence" value="ECO:0000315"/>
    <property type="project" value="UniProtKB"/>
</dbReference>
<dbReference type="CDD" id="cd19841">
    <property type="entry name" value="Bbox1_TRIM44"/>
    <property type="match status" value="1"/>
</dbReference>
<dbReference type="CDD" id="cd19784">
    <property type="entry name" value="Bbox2_TRIM44"/>
    <property type="match status" value="1"/>
</dbReference>
<dbReference type="Gene3D" id="4.10.830.40">
    <property type="match status" value="1"/>
</dbReference>
<dbReference type="Gene3D" id="3.30.160.60">
    <property type="entry name" value="Classic Zinc Finger"/>
    <property type="match status" value="1"/>
</dbReference>
<dbReference type="InterPro" id="IPR050143">
    <property type="entry name" value="TRIM/RBCC"/>
</dbReference>
<dbReference type="InterPro" id="IPR000315">
    <property type="entry name" value="Znf_B-box"/>
</dbReference>
<dbReference type="PANTHER" id="PTHR24103">
    <property type="entry name" value="E3 UBIQUITIN-PROTEIN LIGASE TRIM"/>
    <property type="match status" value="1"/>
</dbReference>
<dbReference type="Pfam" id="PF00643">
    <property type="entry name" value="zf-B_box"/>
    <property type="match status" value="1"/>
</dbReference>
<dbReference type="SMART" id="SM00336">
    <property type="entry name" value="BBOX"/>
    <property type="match status" value="1"/>
</dbReference>
<dbReference type="SUPFAM" id="SSF57845">
    <property type="entry name" value="B-box zinc-binding domain"/>
    <property type="match status" value="1"/>
</dbReference>
<dbReference type="PROSITE" id="PS50119">
    <property type="entry name" value="ZF_BBOX"/>
    <property type="match status" value="1"/>
</dbReference>
<comment type="function">
    <text evidence="1 6 7">May play a role in the process of differentiation and maturation of neuronal cells (By similarity). May regulate the activity of TRIM17. Is a negative regulator of PAX6 expression (PubMed:26394807).</text>
</comment>
<comment type="subunit">
    <text evidence="6">Interacts (via coiled coil) with TRIM17 (via coiled coil).</text>
</comment>
<comment type="interaction">
    <interactant intactId="EBI-8787399">
        <id>Q96DX7</id>
    </interactant>
    <interactant intactId="EBI-10269566">
        <id>Q8NDC4</id>
        <label>MORN4</label>
    </interactant>
    <organismsDiffer>false</organismsDiffer>
    <experiments>3</experiments>
</comment>
<comment type="interaction">
    <interactant intactId="EBI-8787399">
        <id>Q96DX7</id>
    </interactant>
    <interactant intactId="EBI-10244393">
        <id>Q5JS98</id>
        <label>PBX3</label>
    </interactant>
    <organismsDiffer>false</organismsDiffer>
    <experiments>3</experiments>
</comment>
<comment type="interaction">
    <interactant intactId="EBI-8787399">
        <id>Q96DX7</id>
    </interactant>
    <interactant intactId="EBI-79165">
        <id>Q9NRD5</id>
        <label>PICK1</label>
    </interactant>
    <organismsDiffer>false</organismsDiffer>
    <experiments>3</experiments>
</comment>
<comment type="interaction">
    <interactant intactId="EBI-8787399">
        <id>Q96DX7</id>
    </interactant>
    <interactant intactId="EBI-11981577">
        <id>Q9UDY6-2</id>
        <label>TRIM10</label>
    </interactant>
    <organismsDiffer>false</organismsDiffer>
    <experiments>4</experiments>
</comment>
<comment type="interaction">
    <interactant intactId="EBI-8787399">
        <id>Q96DX7</id>
    </interactant>
    <interactant intactId="EBI-749955">
        <id>Q86WT6</id>
        <label>TRIM69</label>
    </interactant>
    <organismsDiffer>false</organismsDiffer>
    <experiments>3</experiments>
</comment>
<comment type="tissue specificity">
    <text evidence="6">Highly expressed in testis.</text>
</comment>
<comment type="disease" evidence="7">
    <disease id="DI-04859">
        <name>Aniridia 3</name>
        <acronym>AN3</acronym>
        <description>A form of aniridia, a congenital, bilateral, panocular disorder characterized by complete absence of the iris or extreme iris hypoplasia. Aniridia is not just an isolated defect in iris development but it is associated with macular and optic nerve hypoplasia, cataract, corneal changes, nystagmus. Visual acuity is generally low but is unrelated to the degree of iris hypoplasia. Glaucoma is a secondary problem causing additional visual loss over time.</description>
        <dbReference type="MIM" id="617142"/>
    </disease>
    <text>The disease is caused by variants affecting the gene represented in this entry.</text>
</comment>
<protein>
    <recommendedName>
        <fullName>Tripartite motif-containing protein 44</fullName>
    </recommendedName>
    <alternativeName>
        <fullName>Protein DIPB</fullName>
    </alternativeName>
</protein>
<organism>
    <name type="scientific">Homo sapiens</name>
    <name type="common">Human</name>
    <dbReference type="NCBI Taxonomy" id="9606"/>
    <lineage>
        <taxon>Eukaryota</taxon>
        <taxon>Metazoa</taxon>
        <taxon>Chordata</taxon>
        <taxon>Craniata</taxon>
        <taxon>Vertebrata</taxon>
        <taxon>Euteleostomi</taxon>
        <taxon>Mammalia</taxon>
        <taxon>Eutheria</taxon>
        <taxon>Euarchontoglires</taxon>
        <taxon>Primates</taxon>
        <taxon>Haplorrhini</taxon>
        <taxon>Catarrhini</taxon>
        <taxon>Hominidae</taxon>
        <taxon>Homo</taxon>
    </lineage>
</organism>
<keyword id="KW-0175">Coiled coil</keyword>
<keyword id="KW-0225">Disease variant</keyword>
<keyword id="KW-0479">Metal-binding</keyword>
<keyword id="KW-0597">Phosphoprotein</keyword>
<keyword id="KW-1267">Proteomics identification</keyword>
<keyword id="KW-1185">Reference proteome</keyword>
<keyword id="KW-0862">Zinc</keyword>
<keyword id="KW-0863">Zinc-finger</keyword>
<accession>Q96DX7</accession>
<accession>D3DR14</accession>
<accession>Q96QY2</accession>
<accession>Q9UGK0</accession>
<reference key="1">
    <citation type="submission" date="2000-01" db="EMBL/GenBank/DDBJ databases">
        <title>Identification of a novel brain potential partner of dystrophin and utrophin C-terminal end.</title>
        <authorList>
            <person name="Castello A."/>
            <person name="Chafey P."/>
            <person name="Lambert M."/>
            <person name="Collod-Beroud G."/>
        </authorList>
    </citation>
    <scope>NUCLEOTIDE SEQUENCE [MRNA]</scope>
    <source>
        <tissue>Brain</tissue>
    </source>
</reference>
<reference key="2">
    <citation type="journal article" date="2006" name="Nature">
        <title>Human chromosome 11 DNA sequence and analysis including novel gene identification.</title>
        <authorList>
            <person name="Taylor T.D."/>
            <person name="Noguchi H."/>
            <person name="Totoki Y."/>
            <person name="Toyoda A."/>
            <person name="Kuroki Y."/>
            <person name="Dewar K."/>
            <person name="Lloyd C."/>
            <person name="Itoh T."/>
            <person name="Takeda T."/>
            <person name="Kim D.-W."/>
            <person name="She X."/>
            <person name="Barlow K.F."/>
            <person name="Bloom T."/>
            <person name="Bruford E."/>
            <person name="Chang J.L."/>
            <person name="Cuomo C.A."/>
            <person name="Eichler E."/>
            <person name="FitzGerald M.G."/>
            <person name="Jaffe D.B."/>
            <person name="LaButti K."/>
            <person name="Nicol R."/>
            <person name="Park H.-S."/>
            <person name="Seaman C."/>
            <person name="Sougnez C."/>
            <person name="Yang X."/>
            <person name="Zimmer A.R."/>
            <person name="Zody M.C."/>
            <person name="Birren B.W."/>
            <person name="Nusbaum C."/>
            <person name="Fujiyama A."/>
            <person name="Hattori M."/>
            <person name="Rogers J."/>
            <person name="Lander E.S."/>
            <person name="Sakaki Y."/>
        </authorList>
    </citation>
    <scope>NUCLEOTIDE SEQUENCE [LARGE SCALE GENOMIC DNA]</scope>
</reference>
<reference key="3">
    <citation type="submission" date="2005-09" db="EMBL/GenBank/DDBJ databases">
        <authorList>
            <person name="Mural R.J."/>
            <person name="Istrail S."/>
            <person name="Sutton G.G."/>
            <person name="Florea L."/>
            <person name="Halpern A.L."/>
            <person name="Mobarry C.M."/>
            <person name="Lippert R."/>
            <person name="Walenz B."/>
            <person name="Shatkay H."/>
            <person name="Dew I."/>
            <person name="Miller J.R."/>
            <person name="Flanigan M.J."/>
            <person name="Edwards N.J."/>
            <person name="Bolanos R."/>
            <person name="Fasulo D."/>
            <person name="Halldorsson B.V."/>
            <person name="Hannenhalli S."/>
            <person name="Turner R."/>
            <person name="Yooseph S."/>
            <person name="Lu F."/>
            <person name="Nusskern D.R."/>
            <person name="Shue B.C."/>
            <person name="Zheng X.H."/>
            <person name="Zhong F."/>
            <person name="Delcher A.L."/>
            <person name="Huson D.H."/>
            <person name="Kravitz S.A."/>
            <person name="Mouchard L."/>
            <person name="Reinert K."/>
            <person name="Remington K.A."/>
            <person name="Clark A.G."/>
            <person name="Waterman M.S."/>
            <person name="Eichler E.E."/>
            <person name="Adams M.D."/>
            <person name="Hunkapiller M.W."/>
            <person name="Myers E.W."/>
            <person name="Venter J.C."/>
        </authorList>
    </citation>
    <scope>NUCLEOTIDE SEQUENCE [LARGE SCALE GENOMIC DNA]</scope>
</reference>
<reference key="4">
    <citation type="journal article" date="2004" name="Genome Res.">
        <title>The status, quality, and expansion of the NIH full-length cDNA project: the Mammalian Gene Collection (MGC).</title>
        <authorList>
            <consortium name="The MGC Project Team"/>
        </authorList>
    </citation>
    <scope>NUCLEOTIDE SEQUENCE [LARGE SCALE MRNA]</scope>
    <source>
        <tissue>Muscle</tissue>
        <tissue>Skin</tissue>
    </source>
</reference>
<reference key="5">
    <citation type="journal article" date="2006" name="Nat. Biotechnol.">
        <title>A probability-based approach for high-throughput protein phosphorylation analysis and site localization.</title>
        <authorList>
            <person name="Beausoleil S.A."/>
            <person name="Villen J."/>
            <person name="Gerber S.A."/>
            <person name="Rush J."/>
            <person name="Gygi S.P."/>
        </authorList>
    </citation>
    <scope>IDENTIFICATION BY MASS SPECTROMETRY [LARGE SCALE ANALYSIS]</scope>
    <source>
        <tissue>Cervix carcinoma</tissue>
    </source>
</reference>
<reference key="6">
    <citation type="journal article" date="2009" name="Biochem. Biophys. Res. Commun.">
        <title>TRIM44 interacts with and stabilizes terf, a TRIM ubiquitin E3 ligase.</title>
        <authorList>
            <person name="Urano T."/>
            <person name="Usui T."/>
            <person name="Takeda S."/>
            <person name="Ikeda K."/>
            <person name="Okada A."/>
            <person name="Ishida Y."/>
            <person name="Iwayanagi T."/>
            <person name="Otomo J."/>
            <person name="Ouchi Y."/>
            <person name="Inoue S."/>
        </authorList>
    </citation>
    <scope>INTERACTION WITH TRIM17</scope>
    <scope>FUNCTION</scope>
    <scope>TISSUE SPECIFICITY</scope>
</reference>
<reference key="7">
    <citation type="journal article" date="2015" name="Hum. Mutat.">
        <title>Variants in TRIM44 cause aniridia by impairing PAX6 expression.</title>
        <authorList>
            <person name="Zhang X."/>
            <person name="Qin G."/>
            <person name="Chen G."/>
            <person name="Li T."/>
            <person name="Gao L."/>
            <person name="Huang L."/>
            <person name="Zhang Y."/>
            <person name="Ouyang K."/>
            <person name="Wang Y."/>
            <person name="Pang Y."/>
            <person name="Zeng B."/>
            <person name="Yu L."/>
        </authorList>
    </citation>
    <scope>FUNCTION</scope>
    <scope>INVOLVEMENT IN AN3</scope>
    <scope>VARIANT TYR-64</scope>
    <scope>CHARACTERIZATION OF VARIANT TYR-64</scope>
    <scope>VARIANT AN3 ARG-155</scope>
    <scope>CHARACTERIZATION OF VARIANT AN3 ARG-155</scope>
</reference>
<name>TRI44_HUMAN</name>
<proteinExistence type="evidence at protein level"/>
<gene>
    <name type="primary">TRIM44</name>
    <name type="synonym">DIPB</name>
</gene>
<sequence length="344" mass="38472">MASGVGAAFEELPHDGTCDECEPDEAPGAEEVCRECGFCYCRRHAEAHRQKFLSHHLAEYVHGSQAWTPPADGEGAGKEEAEVKVEQEREIESEAGEESESEEESESEEESETEEESEDESDEESEEDSEEEMEDEQESEAEEDNQEEGESEAEGETEAESEFDPEIEMEAERVAKRKCPDHGLDLSTYCQEDRQLICVLCPVIGAHQGHQLSTLDEAFEELRSKDSGGLKAAMIELVERLKFKSSDPKVTRDQMKMFIQQEFKKVQKVIADEEQKALHLVDIQEAMATAHVTEILADIQSHMDRLMTQMAQAKEQLDTSNESAEPKAEGDEEGPSGASEEEDT</sequence>